<gene>
    <name type="primary">CHS4-2</name>
    <name type="synonym">CHSI</name>
</gene>
<sequence>MVSVSEIRNAQRAEGPATTLAIGTANPTNCVEQSTYPDFYFKITNSEHKTELKEKFQRMCDKSMIKRRYMYLTEEILKENPSVCEIMAPSLDAWQDMVVVEVPRLGKEAAVKAIKEWGQPKSKITHLIVCTTSGVDMPGADYQLTKLLGLRPYVKRYMMYQQGCFAGGTVLRLAKDLAENNKGARVLVVCSEVTAVTFRGPSDTHLDSLVGQALFGDGAAALIVGSDPVPEIEKPIFEMVWTAQTIAPDSEGAIDGHLREAGLTFHLLKDVPGIVSKNINKALVEAFEPLGISDYNSIFWIAHPGGPAILDQVEQKLALKPEKMKATREVLSEYGNMSSACVLFILDEMRKKSAQDGLKTTGEGLEWGVLFGFGPGLTIETVVLRSVAI</sequence>
<dbReference type="EC" id="2.3.1.74"/>
<dbReference type="EMBL" id="X68106">
    <property type="protein sequence ID" value="CAA48226.1"/>
    <property type="molecule type" value="mRNA"/>
</dbReference>
<dbReference type="EMBL" id="U01019">
    <property type="protein sequence ID" value="AAB41560.1"/>
    <property type="molecule type" value="mRNA"/>
</dbReference>
<dbReference type="PIR" id="S26414">
    <property type="entry name" value="S26414"/>
</dbReference>
<dbReference type="SMR" id="P51078"/>
<dbReference type="UniPathway" id="UPA00154"/>
<dbReference type="GO" id="GO:0016210">
    <property type="term" value="F:naringenin-chalcone synthase activity"/>
    <property type="evidence" value="ECO:0007669"/>
    <property type="project" value="UniProtKB-EC"/>
</dbReference>
<dbReference type="GO" id="GO:0009813">
    <property type="term" value="P:flavonoid biosynthetic process"/>
    <property type="evidence" value="ECO:0007669"/>
    <property type="project" value="UniProtKB-UniPathway"/>
</dbReference>
<dbReference type="GO" id="GO:0030639">
    <property type="term" value="P:polyketide biosynthetic process"/>
    <property type="evidence" value="ECO:0007669"/>
    <property type="project" value="TreeGrafter"/>
</dbReference>
<dbReference type="CDD" id="cd00831">
    <property type="entry name" value="CHS_like"/>
    <property type="match status" value="1"/>
</dbReference>
<dbReference type="FunFam" id="3.40.47.10:FF:000014">
    <property type="entry name" value="Chalcone synthase 1"/>
    <property type="match status" value="1"/>
</dbReference>
<dbReference type="FunFam" id="3.40.47.10:FF:000025">
    <property type="entry name" value="Chalcone synthase 2"/>
    <property type="match status" value="1"/>
</dbReference>
<dbReference type="Gene3D" id="3.40.47.10">
    <property type="match status" value="2"/>
</dbReference>
<dbReference type="InterPro" id="IPR012328">
    <property type="entry name" value="Chalcone/stilbene_synt_C"/>
</dbReference>
<dbReference type="InterPro" id="IPR001099">
    <property type="entry name" value="Chalcone/stilbene_synt_N"/>
</dbReference>
<dbReference type="InterPro" id="IPR018088">
    <property type="entry name" value="Chalcone/stilbene_synthase_AS"/>
</dbReference>
<dbReference type="InterPro" id="IPR011141">
    <property type="entry name" value="Polyketide_synthase_type-III"/>
</dbReference>
<dbReference type="InterPro" id="IPR016039">
    <property type="entry name" value="Thiolase-like"/>
</dbReference>
<dbReference type="PANTHER" id="PTHR11877:SF62">
    <property type="entry name" value="CHALCONE SYNTHASE 7"/>
    <property type="match status" value="1"/>
</dbReference>
<dbReference type="PANTHER" id="PTHR11877">
    <property type="entry name" value="HYDROXYMETHYLGLUTARYL-COA SYNTHASE"/>
    <property type="match status" value="1"/>
</dbReference>
<dbReference type="Pfam" id="PF02797">
    <property type="entry name" value="Chal_sti_synt_C"/>
    <property type="match status" value="1"/>
</dbReference>
<dbReference type="Pfam" id="PF00195">
    <property type="entry name" value="Chal_sti_synt_N"/>
    <property type="match status" value="1"/>
</dbReference>
<dbReference type="PIRSF" id="PIRSF000451">
    <property type="entry name" value="PKS_III"/>
    <property type="match status" value="1"/>
</dbReference>
<dbReference type="SUPFAM" id="SSF53901">
    <property type="entry name" value="Thiolase-like"/>
    <property type="match status" value="2"/>
</dbReference>
<dbReference type="PROSITE" id="PS00441">
    <property type="entry name" value="CHALCONE_SYNTH"/>
    <property type="match status" value="1"/>
</dbReference>
<name>CHS5_MEDSA</name>
<accession>P51078</accession>
<organism>
    <name type="scientific">Medicago sativa</name>
    <name type="common">Alfalfa</name>
    <dbReference type="NCBI Taxonomy" id="3879"/>
    <lineage>
        <taxon>Eukaryota</taxon>
        <taxon>Viridiplantae</taxon>
        <taxon>Streptophyta</taxon>
        <taxon>Embryophyta</taxon>
        <taxon>Tracheophyta</taxon>
        <taxon>Spermatophyta</taxon>
        <taxon>Magnoliopsida</taxon>
        <taxon>eudicotyledons</taxon>
        <taxon>Gunneridae</taxon>
        <taxon>Pentapetalae</taxon>
        <taxon>rosids</taxon>
        <taxon>fabids</taxon>
        <taxon>Fabales</taxon>
        <taxon>Fabaceae</taxon>
        <taxon>Papilionoideae</taxon>
        <taxon>50 kb inversion clade</taxon>
        <taxon>NPAAA clade</taxon>
        <taxon>Hologalegina</taxon>
        <taxon>IRL clade</taxon>
        <taxon>Trifolieae</taxon>
        <taxon>Medicago</taxon>
    </lineage>
</organism>
<feature type="chain" id="PRO_0000216010" description="Chalcone synthase 4-2">
    <location>
        <begin position="1"/>
        <end position="389"/>
    </location>
</feature>
<feature type="active site" evidence="1">
    <location>
        <position position="164"/>
    </location>
</feature>
<feature type="sequence conflict" description="In Ref. 2; AAB41560." evidence="2" ref="2">
    <original>I</original>
    <variation>Y</variation>
    <location>
        <position position="86"/>
    </location>
</feature>
<feature type="sequence conflict" description="In Ref. 2; AAB41560." evidence="2" ref="2">
    <original>W</original>
    <variation>R</variation>
    <location>
        <position position="94"/>
    </location>
</feature>
<comment type="function">
    <text>The primary product of this enzyme is 4,2',4',6'-tetrahydroxychalcone (also termed naringenin-chalcone or chalcone) which can under specific conditions spontaneously isomerize into naringenin.</text>
</comment>
<comment type="catalytic activity">
    <reaction evidence="1">
        <text>(E)-4-coumaroyl-CoA + 3 malonyl-CoA + 3 H(+) = 2',4,4',6'-tetrahydroxychalcone + 3 CO2 + 4 CoA</text>
        <dbReference type="Rhea" id="RHEA:11128"/>
        <dbReference type="ChEBI" id="CHEBI:15378"/>
        <dbReference type="ChEBI" id="CHEBI:15413"/>
        <dbReference type="ChEBI" id="CHEBI:16526"/>
        <dbReference type="ChEBI" id="CHEBI:57287"/>
        <dbReference type="ChEBI" id="CHEBI:57384"/>
        <dbReference type="ChEBI" id="CHEBI:85008"/>
        <dbReference type="EC" id="2.3.1.74"/>
    </reaction>
</comment>
<comment type="pathway">
    <text>Secondary metabolite biosynthesis; flavonoid biosynthesis.</text>
</comment>
<comment type="developmental stage">
    <text>Highest expression in young root tips.</text>
</comment>
<comment type="induction">
    <text>By infection.</text>
</comment>
<comment type="similarity">
    <text evidence="2">Belongs to the thiolase-like superfamily. Chalcone/stilbene synthases family.</text>
</comment>
<keyword id="KW-0012">Acyltransferase</keyword>
<keyword id="KW-0284">Flavonoid biosynthesis</keyword>
<keyword id="KW-0808">Transferase</keyword>
<protein>
    <recommendedName>
        <fullName>Chalcone synthase 4-2</fullName>
        <ecNumber>2.3.1.74</ecNumber>
    </recommendedName>
    <alternativeName>
        <fullName>Naringenin-chalcone synthase 4-2</fullName>
    </alternativeName>
</protein>
<reference key="1">
    <citation type="journal article" date="1993" name="Mol. Plant Microbe Interact.">
        <title>Pathological and molecular characterizations of alfalfa interactions with compatible and incompatible bacteria, Xanthomonas campestris pv. alfalfae and Pseudomonas syringae pv. pisi.</title>
        <authorList>
            <person name="Esnault R."/>
            <person name="Buffard D."/>
            <person name="Breda C."/>
            <person name="Sallaud C."/>
            <person name="El-Turk J."/>
            <person name="Kondorosi A."/>
        </authorList>
    </citation>
    <scope>NUCLEOTIDE SEQUENCE [MRNA]</scope>
    <source>
        <strain>cv. Nagyszenasi</strain>
        <tissue>Leaf</tissue>
    </source>
</reference>
<reference key="2">
    <citation type="journal article" date="1994" name="Plant Mol. Biol.">
        <title>Isolation of chalcone synthase and chalcone isomerase cDNAs from alfalfa (Medicago sativa L.): highest transcript levels occur in young roots and root tips.</title>
        <authorList>
            <person name="McKhann H.I."/>
            <person name="Hirsch A.M."/>
        </authorList>
    </citation>
    <scope>NUCLEOTIDE SEQUENCE [MRNA] OF 19-389</scope>
    <source>
        <strain>cv. Iroquois</strain>
        <tissue>Root nodule</tissue>
    </source>
</reference>
<evidence type="ECO:0000255" key="1">
    <source>
        <dbReference type="PROSITE-ProRule" id="PRU10023"/>
    </source>
</evidence>
<evidence type="ECO:0000305" key="2"/>
<proteinExistence type="evidence at transcript level"/>